<gene>
    <name evidence="1" type="primary">murD</name>
    <name type="ordered locus">Wbm0508</name>
</gene>
<dbReference type="EC" id="6.3.2.9" evidence="1"/>
<dbReference type="EMBL" id="AE017321">
    <property type="protein sequence ID" value="AAW71096.1"/>
    <property type="molecule type" value="Genomic_DNA"/>
</dbReference>
<dbReference type="RefSeq" id="WP_011256706.1">
    <property type="nucleotide sequence ID" value="NC_006833.1"/>
</dbReference>
<dbReference type="SMR" id="Q5GSC8"/>
<dbReference type="STRING" id="292805.Wbm0508"/>
<dbReference type="KEGG" id="wbm:Wbm0508"/>
<dbReference type="eggNOG" id="COG0771">
    <property type="taxonomic scope" value="Bacteria"/>
</dbReference>
<dbReference type="HOGENOM" id="CLU_032540_3_0_5"/>
<dbReference type="UniPathway" id="UPA00219"/>
<dbReference type="Proteomes" id="UP000000534">
    <property type="component" value="Chromosome"/>
</dbReference>
<dbReference type="GO" id="GO:0005737">
    <property type="term" value="C:cytoplasm"/>
    <property type="evidence" value="ECO:0007669"/>
    <property type="project" value="UniProtKB-SubCell"/>
</dbReference>
<dbReference type="GO" id="GO:0005524">
    <property type="term" value="F:ATP binding"/>
    <property type="evidence" value="ECO:0007669"/>
    <property type="project" value="UniProtKB-UniRule"/>
</dbReference>
<dbReference type="GO" id="GO:0004326">
    <property type="term" value="F:tetrahydrofolylpolyglutamate synthase activity"/>
    <property type="evidence" value="ECO:0007669"/>
    <property type="project" value="InterPro"/>
</dbReference>
<dbReference type="GO" id="GO:0008764">
    <property type="term" value="F:UDP-N-acetylmuramoylalanine-D-glutamate ligase activity"/>
    <property type="evidence" value="ECO:0007669"/>
    <property type="project" value="UniProtKB-UniRule"/>
</dbReference>
<dbReference type="GO" id="GO:0051301">
    <property type="term" value="P:cell division"/>
    <property type="evidence" value="ECO:0007669"/>
    <property type="project" value="UniProtKB-KW"/>
</dbReference>
<dbReference type="GO" id="GO:0071555">
    <property type="term" value="P:cell wall organization"/>
    <property type="evidence" value="ECO:0007669"/>
    <property type="project" value="UniProtKB-KW"/>
</dbReference>
<dbReference type="GO" id="GO:0009252">
    <property type="term" value="P:peptidoglycan biosynthetic process"/>
    <property type="evidence" value="ECO:0007669"/>
    <property type="project" value="UniProtKB-UniRule"/>
</dbReference>
<dbReference type="GO" id="GO:0008360">
    <property type="term" value="P:regulation of cell shape"/>
    <property type="evidence" value="ECO:0007669"/>
    <property type="project" value="UniProtKB-KW"/>
</dbReference>
<dbReference type="Gene3D" id="3.90.190.20">
    <property type="entry name" value="Mur ligase, C-terminal domain"/>
    <property type="match status" value="1"/>
</dbReference>
<dbReference type="Gene3D" id="3.40.1190.10">
    <property type="entry name" value="Mur-like, catalytic domain"/>
    <property type="match status" value="1"/>
</dbReference>
<dbReference type="Gene3D" id="3.40.50.720">
    <property type="entry name" value="NAD(P)-binding Rossmann-like Domain"/>
    <property type="match status" value="1"/>
</dbReference>
<dbReference type="HAMAP" id="MF_00639">
    <property type="entry name" value="MurD"/>
    <property type="match status" value="1"/>
</dbReference>
<dbReference type="InterPro" id="IPR018109">
    <property type="entry name" value="Folylpolyglutamate_synth_CS"/>
</dbReference>
<dbReference type="InterPro" id="IPR036565">
    <property type="entry name" value="Mur-like_cat_sf"/>
</dbReference>
<dbReference type="InterPro" id="IPR036615">
    <property type="entry name" value="Mur_ligase_C_dom_sf"/>
</dbReference>
<dbReference type="InterPro" id="IPR013221">
    <property type="entry name" value="Mur_ligase_cen"/>
</dbReference>
<dbReference type="InterPro" id="IPR005762">
    <property type="entry name" value="MurD"/>
</dbReference>
<dbReference type="InterPro" id="IPR036291">
    <property type="entry name" value="NAD(P)-bd_dom_sf"/>
</dbReference>
<dbReference type="NCBIfam" id="TIGR01087">
    <property type="entry name" value="murD"/>
    <property type="match status" value="1"/>
</dbReference>
<dbReference type="PANTHER" id="PTHR43692">
    <property type="entry name" value="UDP-N-ACETYLMURAMOYLALANINE--D-GLUTAMATE LIGASE"/>
    <property type="match status" value="1"/>
</dbReference>
<dbReference type="PANTHER" id="PTHR43692:SF1">
    <property type="entry name" value="UDP-N-ACETYLMURAMOYLALANINE--D-GLUTAMATE LIGASE"/>
    <property type="match status" value="1"/>
</dbReference>
<dbReference type="Pfam" id="PF08245">
    <property type="entry name" value="Mur_ligase_M"/>
    <property type="match status" value="2"/>
</dbReference>
<dbReference type="Pfam" id="PF21799">
    <property type="entry name" value="MurD-like_N"/>
    <property type="match status" value="1"/>
</dbReference>
<dbReference type="SUPFAM" id="SSF53623">
    <property type="entry name" value="MurD-like peptide ligases, catalytic domain"/>
    <property type="match status" value="2"/>
</dbReference>
<dbReference type="SUPFAM" id="SSF53244">
    <property type="entry name" value="MurD-like peptide ligases, peptide-binding domain"/>
    <property type="match status" value="1"/>
</dbReference>
<dbReference type="SUPFAM" id="SSF51735">
    <property type="entry name" value="NAD(P)-binding Rossmann-fold domains"/>
    <property type="match status" value="1"/>
</dbReference>
<evidence type="ECO:0000255" key="1">
    <source>
        <dbReference type="HAMAP-Rule" id="MF_00639"/>
    </source>
</evidence>
<proteinExistence type="inferred from homology"/>
<organism>
    <name type="scientific">Wolbachia sp. subsp. Brugia malayi (strain TRS)</name>
    <dbReference type="NCBI Taxonomy" id="292805"/>
    <lineage>
        <taxon>Bacteria</taxon>
        <taxon>Pseudomonadati</taxon>
        <taxon>Pseudomonadota</taxon>
        <taxon>Alphaproteobacteria</taxon>
        <taxon>Rickettsiales</taxon>
        <taxon>Anaplasmataceae</taxon>
        <taxon>Wolbachieae</taxon>
        <taxon>Wolbachia</taxon>
    </lineage>
</organism>
<comment type="function">
    <text evidence="1">Cell wall formation. Catalyzes the addition of glutamate to the nucleotide precursor UDP-N-acetylmuramoyl-L-alanine (UMA).</text>
</comment>
<comment type="catalytic activity">
    <reaction evidence="1">
        <text>UDP-N-acetyl-alpha-D-muramoyl-L-alanine + D-glutamate + ATP = UDP-N-acetyl-alpha-D-muramoyl-L-alanyl-D-glutamate + ADP + phosphate + H(+)</text>
        <dbReference type="Rhea" id="RHEA:16429"/>
        <dbReference type="ChEBI" id="CHEBI:15378"/>
        <dbReference type="ChEBI" id="CHEBI:29986"/>
        <dbReference type="ChEBI" id="CHEBI:30616"/>
        <dbReference type="ChEBI" id="CHEBI:43474"/>
        <dbReference type="ChEBI" id="CHEBI:83898"/>
        <dbReference type="ChEBI" id="CHEBI:83900"/>
        <dbReference type="ChEBI" id="CHEBI:456216"/>
        <dbReference type="EC" id="6.3.2.9"/>
    </reaction>
</comment>
<comment type="pathway">
    <text evidence="1">Cell wall biogenesis; peptidoglycan biosynthesis.</text>
</comment>
<comment type="subcellular location">
    <subcellularLocation>
        <location evidence="1">Cytoplasm</location>
    </subcellularLocation>
</comment>
<comment type="similarity">
    <text evidence="1">Belongs to the MurCDEF family.</text>
</comment>
<feature type="chain" id="PRO_0000257261" description="UDP-N-acetylmuramoylalanine--D-glutamate ligase">
    <location>
        <begin position="1"/>
        <end position="498"/>
    </location>
</feature>
<feature type="binding site" evidence="1">
    <location>
        <begin position="119"/>
        <end position="125"/>
    </location>
    <ligand>
        <name>ATP</name>
        <dbReference type="ChEBI" id="CHEBI:30616"/>
    </ligand>
</feature>
<name>MURD_WOLTR</name>
<reference key="1">
    <citation type="journal article" date="2005" name="PLoS Biol.">
        <title>The Wolbachia genome of Brugia malayi: endosymbiont evolution within a human pathogenic nematode.</title>
        <authorList>
            <person name="Foster J."/>
            <person name="Ganatra M."/>
            <person name="Kamal I."/>
            <person name="Ware J."/>
            <person name="Makarova K."/>
            <person name="Ivanova N."/>
            <person name="Bhattacharyya A."/>
            <person name="Kapatral V."/>
            <person name="Kumar S."/>
            <person name="Posfai J."/>
            <person name="Vincze T."/>
            <person name="Ingram J."/>
            <person name="Moran L."/>
            <person name="Lapidus A."/>
            <person name="Omelchenko M."/>
            <person name="Kyrpides N."/>
            <person name="Ghedin E."/>
            <person name="Wang S."/>
            <person name="Goltsman E."/>
            <person name="Joukov V."/>
            <person name="Ostrovskaya O."/>
            <person name="Tsukerman K."/>
            <person name="Mazur M."/>
            <person name="Comb D."/>
            <person name="Koonin E."/>
            <person name="Slatko B."/>
        </authorList>
    </citation>
    <scope>NUCLEOTIDE SEQUENCE [LARGE SCALE GENOMIC DNA]</scope>
    <source>
        <strain>TRS</strain>
    </source>
</reference>
<protein>
    <recommendedName>
        <fullName evidence="1">UDP-N-acetylmuramoylalanine--D-glutamate ligase</fullName>
        <ecNumber evidence="1">6.3.2.9</ecNumber>
    </recommendedName>
    <alternativeName>
        <fullName evidence="1">D-glutamic acid-adding enzyme</fullName>
    </alternativeName>
    <alternativeName>
        <fullName evidence="1">UDP-N-acetylmuramoyl-L-alanyl-D-glutamate synthetase</fullName>
    </alternativeName>
</protein>
<sequence>MQLSKYKNQSVAVFGLGKTGLSVINVLIKSGAKAYAWDDSKEQMANAKTMYKECNFIHPKKYDWHEIKALILSPGVPISYPKPHWIVKLARSFDCKIKSDIELFLEAKAKNQKIVGVTGTNGKSTTTSLIGHILKSAGKKVAIGGNLGVPILDLEKDAEIYVIEISSFQLELINMPAVIPVHDHTFFSGSQYRAAWMIKRVSEMTKKMTEVTKRMAGMIKVDISVLLNITLDHIDRHGSMENYIAVKSKLIGGSKVAVIGCDNEITADIFNKFTGNKIPISGVRSLLDDKKGAEIQEISLKLENHNLSASDAKINLTSNAENIAASCAVCKLLKVDSSTIIDGIKSFSGLKHRNELLGKIENVLFVNDSKATNAESSKKAILSYKNIYWIVGGRSKEGGIESLSKHFARIRKALLIGESTEVFASTMENKVDYVRCCNLEDAFRLAFEEAIKSKEKTTILLSPACASFDQWRNFEERGEAFCRMFEKLRDSFTITRVV</sequence>
<accession>Q5GSC8</accession>
<keyword id="KW-0067">ATP-binding</keyword>
<keyword id="KW-0131">Cell cycle</keyword>
<keyword id="KW-0132">Cell division</keyword>
<keyword id="KW-0133">Cell shape</keyword>
<keyword id="KW-0961">Cell wall biogenesis/degradation</keyword>
<keyword id="KW-0963">Cytoplasm</keyword>
<keyword id="KW-0436">Ligase</keyword>
<keyword id="KW-0547">Nucleotide-binding</keyword>
<keyword id="KW-0573">Peptidoglycan synthesis</keyword>
<keyword id="KW-1185">Reference proteome</keyword>